<accession>A9N2D8</accession>
<feature type="chain" id="PRO_1000075067" description="Sulfate adenylyltransferase subunit 1">
    <location>
        <begin position="1"/>
        <end position="479"/>
    </location>
</feature>
<feature type="domain" description="tr-type G">
    <location>
        <begin position="25"/>
        <end position="239"/>
    </location>
</feature>
<feature type="region of interest" description="G1" evidence="1">
    <location>
        <begin position="34"/>
        <end position="41"/>
    </location>
</feature>
<feature type="region of interest" description="G2" evidence="1">
    <location>
        <begin position="92"/>
        <end position="96"/>
    </location>
</feature>
<feature type="region of interest" description="G3" evidence="1">
    <location>
        <begin position="113"/>
        <end position="116"/>
    </location>
</feature>
<feature type="region of interest" description="G4" evidence="1">
    <location>
        <begin position="168"/>
        <end position="171"/>
    </location>
</feature>
<feature type="region of interest" description="G5" evidence="1">
    <location>
        <begin position="206"/>
        <end position="208"/>
    </location>
</feature>
<feature type="binding site" evidence="2">
    <location>
        <begin position="34"/>
        <end position="41"/>
    </location>
    <ligand>
        <name>GTP</name>
        <dbReference type="ChEBI" id="CHEBI:37565"/>
    </ligand>
</feature>
<feature type="binding site" evidence="2">
    <location>
        <begin position="113"/>
        <end position="117"/>
    </location>
    <ligand>
        <name>GTP</name>
        <dbReference type="ChEBI" id="CHEBI:37565"/>
    </ligand>
</feature>
<feature type="binding site" evidence="2">
    <location>
        <begin position="168"/>
        <end position="171"/>
    </location>
    <ligand>
        <name>GTP</name>
        <dbReference type="ChEBI" id="CHEBI:37565"/>
    </ligand>
</feature>
<organism>
    <name type="scientific">Salmonella paratyphi B (strain ATCC BAA-1250 / SPB7)</name>
    <dbReference type="NCBI Taxonomy" id="1016998"/>
    <lineage>
        <taxon>Bacteria</taxon>
        <taxon>Pseudomonadati</taxon>
        <taxon>Pseudomonadota</taxon>
        <taxon>Gammaproteobacteria</taxon>
        <taxon>Enterobacterales</taxon>
        <taxon>Enterobacteriaceae</taxon>
        <taxon>Salmonella</taxon>
    </lineage>
</organism>
<sequence length="479" mass="53124">MNTILAQQIANEGGVEAWMIAQQHKSLLRFLTCGSVDDGKSTLIGRLLHDTLQIYEDQLSSLHNDSKRHGTQGEKLDLALLVDGLQAEREQGITIDVAYRYFSTEKRKFIIADTPGHEQYTRNMATGASTCDLAILLIDARKGVLDQTRRHSFISTLLGIKHLVVAINKMDLVDYREETFARIREDYLTFAEQLPGDLDIRFVPLSALEGDNVAAQSANMRWYSGPTLLEVLETVDIQRAVDRQPMRFPVQYVNRPNLDFRGYAGTLASGSVKVGERIKVLPSGVESSVARIVTFDGDKEEACAGEAITLVLNDDIDISRGDLLLAANETLAPARHAAIDVVWMAEQPLAPGQSYDVKLAGKKTRARIEAIRYQIDINNLTQRDVESLPLNGIGLVEMTFDEPLALDIYQQNPVTGGLIFIDRLSNVTVGAGMVRELDERGATPSVEYSAFELELNALVRRHFPHWDARDLLGDKHGAA</sequence>
<comment type="function">
    <text evidence="2">With CysD forms the ATP sulfurylase (ATPS) that catalyzes the adenylation of sulfate producing adenosine 5'-phosphosulfate (APS) and diphosphate, the first enzymatic step in sulfur assimilation pathway. APS synthesis involves the formation of a high-energy phosphoric-sulfuric acid anhydride bond driven by GTP hydrolysis by CysN coupled to ATP hydrolysis by CysD.</text>
</comment>
<comment type="catalytic activity">
    <reaction evidence="2">
        <text>sulfate + ATP + H(+) = adenosine 5'-phosphosulfate + diphosphate</text>
        <dbReference type="Rhea" id="RHEA:18133"/>
        <dbReference type="ChEBI" id="CHEBI:15378"/>
        <dbReference type="ChEBI" id="CHEBI:16189"/>
        <dbReference type="ChEBI" id="CHEBI:30616"/>
        <dbReference type="ChEBI" id="CHEBI:33019"/>
        <dbReference type="ChEBI" id="CHEBI:58243"/>
        <dbReference type="EC" id="2.7.7.4"/>
    </reaction>
</comment>
<comment type="pathway">
    <text evidence="2">Sulfur metabolism; hydrogen sulfide biosynthesis; sulfite from sulfate: step 1/3.</text>
</comment>
<comment type="subunit">
    <text evidence="2">Heterodimer composed of CysD, the smaller subunit, and CysN.</text>
</comment>
<comment type="similarity">
    <text evidence="2">Belongs to the TRAFAC class translation factor GTPase superfamily. Classic translation factor GTPase family. CysN/NodQ subfamily.</text>
</comment>
<protein>
    <recommendedName>
        <fullName evidence="2">Sulfate adenylyltransferase subunit 1</fullName>
        <ecNumber evidence="2">2.7.7.4</ecNumber>
    </recommendedName>
    <alternativeName>
        <fullName evidence="2">ATP-sulfurylase large subunit</fullName>
    </alternativeName>
    <alternativeName>
        <fullName evidence="2">Sulfate adenylate transferase</fullName>
        <shortName evidence="2">SAT</shortName>
    </alternativeName>
</protein>
<evidence type="ECO:0000250" key="1"/>
<evidence type="ECO:0000255" key="2">
    <source>
        <dbReference type="HAMAP-Rule" id="MF_00062"/>
    </source>
</evidence>
<name>CYSN_SALPB</name>
<proteinExistence type="inferred from homology"/>
<gene>
    <name evidence="2" type="primary">cysN</name>
    <name type="ordered locus">SPAB_03649</name>
</gene>
<dbReference type="EC" id="2.7.7.4" evidence="2"/>
<dbReference type="EMBL" id="CP000886">
    <property type="protein sequence ID" value="ABX68989.1"/>
    <property type="molecule type" value="Genomic_DNA"/>
</dbReference>
<dbReference type="RefSeq" id="WP_001092257.1">
    <property type="nucleotide sequence ID" value="NC_010102.1"/>
</dbReference>
<dbReference type="SMR" id="A9N2D8"/>
<dbReference type="KEGG" id="spq:SPAB_03649"/>
<dbReference type="PATRIC" id="fig|1016998.12.peg.3436"/>
<dbReference type="HOGENOM" id="CLU_007265_5_2_6"/>
<dbReference type="BioCyc" id="SENT1016998:SPAB_RS14870-MONOMER"/>
<dbReference type="UniPathway" id="UPA00140">
    <property type="reaction ID" value="UER00204"/>
</dbReference>
<dbReference type="Proteomes" id="UP000008556">
    <property type="component" value="Chromosome"/>
</dbReference>
<dbReference type="GO" id="GO:0005524">
    <property type="term" value="F:ATP binding"/>
    <property type="evidence" value="ECO:0007669"/>
    <property type="project" value="UniProtKB-KW"/>
</dbReference>
<dbReference type="GO" id="GO:0005525">
    <property type="term" value="F:GTP binding"/>
    <property type="evidence" value="ECO:0007669"/>
    <property type="project" value="UniProtKB-UniRule"/>
</dbReference>
<dbReference type="GO" id="GO:0003924">
    <property type="term" value="F:GTPase activity"/>
    <property type="evidence" value="ECO:0007669"/>
    <property type="project" value="InterPro"/>
</dbReference>
<dbReference type="GO" id="GO:0004781">
    <property type="term" value="F:sulfate adenylyltransferase (ATP) activity"/>
    <property type="evidence" value="ECO:0007669"/>
    <property type="project" value="UniProtKB-UniRule"/>
</dbReference>
<dbReference type="GO" id="GO:0070814">
    <property type="term" value="P:hydrogen sulfide biosynthetic process"/>
    <property type="evidence" value="ECO:0007669"/>
    <property type="project" value="UniProtKB-UniRule"/>
</dbReference>
<dbReference type="GO" id="GO:0000103">
    <property type="term" value="P:sulfate assimilation"/>
    <property type="evidence" value="ECO:0007669"/>
    <property type="project" value="UniProtKB-UniRule"/>
</dbReference>
<dbReference type="CDD" id="cd04166">
    <property type="entry name" value="CysN_ATPS"/>
    <property type="match status" value="1"/>
</dbReference>
<dbReference type="CDD" id="cd03695">
    <property type="entry name" value="CysN_NodQ_II"/>
    <property type="match status" value="1"/>
</dbReference>
<dbReference type="CDD" id="cd04095">
    <property type="entry name" value="CysN_NoDQ_III"/>
    <property type="match status" value="1"/>
</dbReference>
<dbReference type="FunFam" id="2.40.30.10:FF:000027">
    <property type="entry name" value="Sulfate adenylyltransferase subunit 1"/>
    <property type="match status" value="1"/>
</dbReference>
<dbReference type="FunFam" id="2.40.30.10:FF:000031">
    <property type="entry name" value="Sulfate adenylyltransferase subunit 1"/>
    <property type="match status" value="1"/>
</dbReference>
<dbReference type="FunFam" id="3.40.50.300:FF:000119">
    <property type="entry name" value="Sulfate adenylyltransferase subunit 1"/>
    <property type="match status" value="1"/>
</dbReference>
<dbReference type="Gene3D" id="3.40.50.300">
    <property type="entry name" value="P-loop containing nucleotide triphosphate hydrolases"/>
    <property type="match status" value="1"/>
</dbReference>
<dbReference type="Gene3D" id="2.40.30.10">
    <property type="entry name" value="Translation factors"/>
    <property type="match status" value="2"/>
</dbReference>
<dbReference type="HAMAP" id="MF_00062">
    <property type="entry name" value="Sulf_adenylyltr_sub1"/>
    <property type="match status" value="1"/>
</dbReference>
<dbReference type="InterPro" id="IPR041757">
    <property type="entry name" value="CysN_GTP-bd"/>
</dbReference>
<dbReference type="InterPro" id="IPR044138">
    <property type="entry name" value="CysN_II"/>
</dbReference>
<dbReference type="InterPro" id="IPR044139">
    <property type="entry name" value="CysN_NoDQ_III"/>
</dbReference>
<dbReference type="InterPro" id="IPR031157">
    <property type="entry name" value="G_TR_CS"/>
</dbReference>
<dbReference type="InterPro" id="IPR054696">
    <property type="entry name" value="GTP-eEF1A_C"/>
</dbReference>
<dbReference type="InterPro" id="IPR027417">
    <property type="entry name" value="P-loop_NTPase"/>
</dbReference>
<dbReference type="InterPro" id="IPR005225">
    <property type="entry name" value="Small_GTP-bd"/>
</dbReference>
<dbReference type="InterPro" id="IPR011779">
    <property type="entry name" value="SO4_adenylTrfase_lsu"/>
</dbReference>
<dbReference type="InterPro" id="IPR000795">
    <property type="entry name" value="T_Tr_GTP-bd_dom"/>
</dbReference>
<dbReference type="InterPro" id="IPR050100">
    <property type="entry name" value="TRAFAC_GTPase_members"/>
</dbReference>
<dbReference type="InterPro" id="IPR009000">
    <property type="entry name" value="Transl_B-barrel_sf"/>
</dbReference>
<dbReference type="InterPro" id="IPR009001">
    <property type="entry name" value="Transl_elong_EF1A/Init_IF2_C"/>
</dbReference>
<dbReference type="NCBIfam" id="TIGR02034">
    <property type="entry name" value="CysN"/>
    <property type="match status" value="1"/>
</dbReference>
<dbReference type="NCBIfam" id="NF003478">
    <property type="entry name" value="PRK05124.1"/>
    <property type="match status" value="1"/>
</dbReference>
<dbReference type="NCBIfam" id="TIGR00231">
    <property type="entry name" value="small_GTP"/>
    <property type="match status" value="1"/>
</dbReference>
<dbReference type="PANTHER" id="PTHR23115">
    <property type="entry name" value="TRANSLATION FACTOR"/>
    <property type="match status" value="1"/>
</dbReference>
<dbReference type="Pfam" id="PF22594">
    <property type="entry name" value="GTP-eEF1A_C"/>
    <property type="match status" value="1"/>
</dbReference>
<dbReference type="Pfam" id="PF00009">
    <property type="entry name" value="GTP_EFTU"/>
    <property type="match status" value="1"/>
</dbReference>
<dbReference type="PRINTS" id="PR00315">
    <property type="entry name" value="ELONGATNFCT"/>
</dbReference>
<dbReference type="SUPFAM" id="SSF50465">
    <property type="entry name" value="EF-Tu/eEF-1alpha/eIF2-gamma C-terminal domain"/>
    <property type="match status" value="1"/>
</dbReference>
<dbReference type="SUPFAM" id="SSF52540">
    <property type="entry name" value="P-loop containing nucleoside triphosphate hydrolases"/>
    <property type="match status" value="1"/>
</dbReference>
<dbReference type="SUPFAM" id="SSF50447">
    <property type="entry name" value="Translation proteins"/>
    <property type="match status" value="1"/>
</dbReference>
<dbReference type="PROSITE" id="PS00301">
    <property type="entry name" value="G_TR_1"/>
    <property type="match status" value="1"/>
</dbReference>
<dbReference type="PROSITE" id="PS51722">
    <property type="entry name" value="G_TR_2"/>
    <property type="match status" value="1"/>
</dbReference>
<keyword id="KW-0067">ATP-binding</keyword>
<keyword id="KW-0342">GTP-binding</keyword>
<keyword id="KW-0547">Nucleotide-binding</keyword>
<keyword id="KW-0548">Nucleotidyltransferase</keyword>
<keyword id="KW-0808">Transferase</keyword>
<reference key="1">
    <citation type="submission" date="2007-11" db="EMBL/GenBank/DDBJ databases">
        <authorList>
            <consortium name="The Salmonella enterica serovar Paratyphi B Genome Sequencing Project"/>
            <person name="McClelland M."/>
            <person name="Sanderson E.K."/>
            <person name="Porwollik S."/>
            <person name="Spieth J."/>
            <person name="Clifton W.S."/>
            <person name="Fulton R."/>
            <person name="Cordes M."/>
            <person name="Wollam A."/>
            <person name="Shah N."/>
            <person name="Pepin K."/>
            <person name="Bhonagiri V."/>
            <person name="Nash W."/>
            <person name="Johnson M."/>
            <person name="Thiruvilangam P."/>
            <person name="Wilson R."/>
        </authorList>
    </citation>
    <scope>NUCLEOTIDE SEQUENCE [LARGE SCALE GENOMIC DNA]</scope>
    <source>
        <strain>ATCC BAA-1250 / SPB7</strain>
    </source>
</reference>